<accession>A4WNY7</accession>
<gene>
    <name evidence="1" type="primary">atpE</name>
    <name type="ordered locus">Rsph17025_0191</name>
</gene>
<protein>
    <recommendedName>
        <fullName evidence="1">ATP synthase subunit c</fullName>
    </recommendedName>
    <alternativeName>
        <fullName evidence="1">ATP synthase F(0) sector subunit c</fullName>
    </alternativeName>
    <alternativeName>
        <fullName evidence="1">F-type ATPase subunit c</fullName>
        <shortName evidence="1">F-ATPase subunit c</shortName>
    </alternativeName>
    <alternativeName>
        <fullName evidence="1">Lipid-binding protein</fullName>
    </alternativeName>
</protein>
<feature type="chain" id="PRO_0000365921" description="ATP synthase subunit c">
    <location>
        <begin position="1"/>
        <end position="78"/>
    </location>
</feature>
<feature type="transmembrane region" description="Helical" evidence="1">
    <location>
        <begin position="11"/>
        <end position="31"/>
    </location>
</feature>
<feature type="transmembrane region" description="Helical" evidence="1">
    <location>
        <begin position="53"/>
        <end position="73"/>
    </location>
</feature>
<feature type="site" description="Reversibly protonated during proton transport" evidence="1">
    <location>
        <position position="61"/>
    </location>
</feature>
<comment type="function">
    <text evidence="1">F(1)F(0) ATP synthase produces ATP from ADP in the presence of a proton or sodium gradient. F-type ATPases consist of two structural domains, F(1) containing the extramembraneous catalytic core and F(0) containing the membrane proton channel, linked together by a central stalk and a peripheral stalk. During catalysis, ATP synthesis in the catalytic domain of F(1) is coupled via a rotary mechanism of the central stalk subunits to proton translocation.</text>
</comment>
<comment type="function">
    <text evidence="1">Key component of the F(0) channel; it plays a direct role in translocation across the membrane. A homomeric c-ring of between 10-14 subunits forms the central stalk rotor element with the F(1) delta and epsilon subunits.</text>
</comment>
<comment type="subunit">
    <text evidence="1">F-type ATPases have 2 components, F(1) - the catalytic core - and F(0) - the membrane proton channel. F(1) has five subunits: alpha(3), beta(3), gamma(1), delta(1), epsilon(1). F(0) has four main subunits: a(1), b(1), b'(1) and c(10-14). The alpha and beta chains form an alternating ring which encloses part of the gamma chain. F(1) is attached to F(0) by a central stalk formed by the gamma and epsilon chains, while a peripheral stalk is formed by the delta, b and b' chains.</text>
</comment>
<comment type="subcellular location">
    <subcellularLocation>
        <location evidence="1">Cell inner membrane</location>
        <topology evidence="1">Multi-pass membrane protein</topology>
    </subcellularLocation>
</comment>
<comment type="similarity">
    <text evidence="1">Belongs to the ATPase C chain family.</text>
</comment>
<proteinExistence type="inferred from homology"/>
<name>ATPL_CERS5</name>
<sequence>MEGDIAEMGKFIGAGLATIGLGGAGIGVGHVAGNFLAGALRNPSAAPGQMANLFVGIAFAEALGIFSFLIALLLMFAV</sequence>
<reference key="1">
    <citation type="submission" date="2007-04" db="EMBL/GenBank/DDBJ databases">
        <title>Complete sequence of chromosome of Rhodobacter sphaeroides ATCC 17025.</title>
        <authorList>
            <consortium name="US DOE Joint Genome Institute"/>
            <person name="Copeland A."/>
            <person name="Lucas S."/>
            <person name="Lapidus A."/>
            <person name="Barry K."/>
            <person name="Detter J.C."/>
            <person name="Glavina del Rio T."/>
            <person name="Hammon N."/>
            <person name="Israni S."/>
            <person name="Dalin E."/>
            <person name="Tice H."/>
            <person name="Pitluck S."/>
            <person name="Chertkov O."/>
            <person name="Brettin T."/>
            <person name="Bruce D."/>
            <person name="Han C."/>
            <person name="Schmutz J."/>
            <person name="Larimer F."/>
            <person name="Land M."/>
            <person name="Hauser L."/>
            <person name="Kyrpides N."/>
            <person name="Kim E."/>
            <person name="Richardson P."/>
            <person name="Mackenzie C."/>
            <person name="Choudhary M."/>
            <person name="Donohue T.J."/>
            <person name="Kaplan S."/>
        </authorList>
    </citation>
    <scope>NUCLEOTIDE SEQUENCE [LARGE SCALE GENOMIC DNA]</scope>
    <source>
        <strain>ATCC 17025 / ATH 2.4.3</strain>
    </source>
</reference>
<keyword id="KW-0066">ATP synthesis</keyword>
<keyword id="KW-0997">Cell inner membrane</keyword>
<keyword id="KW-1003">Cell membrane</keyword>
<keyword id="KW-0138">CF(0)</keyword>
<keyword id="KW-0375">Hydrogen ion transport</keyword>
<keyword id="KW-0406">Ion transport</keyword>
<keyword id="KW-0446">Lipid-binding</keyword>
<keyword id="KW-0472">Membrane</keyword>
<keyword id="KW-0812">Transmembrane</keyword>
<keyword id="KW-1133">Transmembrane helix</keyword>
<keyword id="KW-0813">Transport</keyword>
<dbReference type="EMBL" id="CP000661">
    <property type="protein sequence ID" value="ABP69101.1"/>
    <property type="molecule type" value="Genomic_DNA"/>
</dbReference>
<dbReference type="SMR" id="A4WNY7"/>
<dbReference type="STRING" id="349102.Rsph17025_0191"/>
<dbReference type="KEGG" id="rsq:Rsph17025_0191"/>
<dbReference type="eggNOG" id="COG0636">
    <property type="taxonomic scope" value="Bacteria"/>
</dbReference>
<dbReference type="HOGENOM" id="CLU_148047_4_0_5"/>
<dbReference type="BioCyc" id="RSPH349102:G1G8M-196-MONOMER"/>
<dbReference type="GO" id="GO:0005886">
    <property type="term" value="C:plasma membrane"/>
    <property type="evidence" value="ECO:0007669"/>
    <property type="project" value="UniProtKB-SubCell"/>
</dbReference>
<dbReference type="GO" id="GO:0045259">
    <property type="term" value="C:proton-transporting ATP synthase complex"/>
    <property type="evidence" value="ECO:0007669"/>
    <property type="project" value="UniProtKB-KW"/>
</dbReference>
<dbReference type="GO" id="GO:0033177">
    <property type="term" value="C:proton-transporting two-sector ATPase complex, proton-transporting domain"/>
    <property type="evidence" value="ECO:0007669"/>
    <property type="project" value="InterPro"/>
</dbReference>
<dbReference type="GO" id="GO:0008289">
    <property type="term" value="F:lipid binding"/>
    <property type="evidence" value="ECO:0007669"/>
    <property type="project" value="UniProtKB-KW"/>
</dbReference>
<dbReference type="GO" id="GO:0046933">
    <property type="term" value="F:proton-transporting ATP synthase activity, rotational mechanism"/>
    <property type="evidence" value="ECO:0007669"/>
    <property type="project" value="UniProtKB-UniRule"/>
</dbReference>
<dbReference type="Gene3D" id="1.20.20.10">
    <property type="entry name" value="F1F0 ATP synthase subunit C"/>
    <property type="match status" value="1"/>
</dbReference>
<dbReference type="HAMAP" id="MF_01396">
    <property type="entry name" value="ATP_synth_c_bact"/>
    <property type="match status" value="1"/>
</dbReference>
<dbReference type="InterPro" id="IPR000454">
    <property type="entry name" value="ATP_synth_F0_csu"/>
</dbReference>
<dbReference type="InterPro" id="IPR038662">
    <property type="entry name" value="ATP_synth_F0_csu_sf"/>
</dbReference>
<dbReference type="InterPro" id="IPR002379">
    <property type="entry name" value="ATPase_proteolipid_c-like_dom"/>
</dbReference>
<dbReference type="InterPro" id="IPR035921">
    <property type="entry name" value="F/V-ATP_Csub_sf"/>
</dbReference>
<dbReference type="NCBIfam" id="NF005733">
    <property type="entry name" value="PRK07558.1"/>
    <property type="match status" value="1"/>
</dbReference>
<dbReference type="PANTHER" id="PTHR10031">
    <property type="entry name" value="ATP SYNTHASE LIPID-BINDING PROTEIN, MITOCHONDRIAL"/>
    <property type="match status" value="1"/>
</dbReference>
<dbReference type="PANTHER" id="PTHR10031:SF0">
    <property type="entry name" value="ATPASE PROTEIN 9"/>
    <property type="match status" value="1"/>
</dbReference>
<dbReference type="Pfam" id="PF00137">
    <property type="entry name" value="ATP-synt_C"/>
    <property type="match status" value="1"/>
</dbReference>
<dbReference type="PRINTS" id="PR00124">
    <property type="entry name" value="ATPASEC"/>
</dbReference>
<dbReference type="SUPFAM" id="SSF81333">
    <property type="entry name" value="F1F0 ATP synthase subunit C"/>
    <property type="match status" value="1"/>
</dbReference>
<organism>
    <name type="scientific">Cereibacter sphaeroides (strain ATCC 17025 / ATH 2.4.3)</name>
    <name type="common">Rhodobacter sphaeroides</name>
    <dbReference type="NCBI Taxonomy" id="349102"/>
    <lineage>
        <taxon>Bacteria</taxon>
        <taxon>Pseudomonadati</taxon>
        <taxon>Pseudomonadota</taxon>
        <taxon>Alphaproteobacteria</taxon>
        <taxon>Rhodobacterales</taxon>
        <taxon>Paracoccaceae</taxon>
        <taxon>Cereibacter</taxon>
    </lineage>
</organism>
<evidence type="ECO:0000255" key="1">
    <source>
        <dbReference type="HAMAP-Rule" id="MF_01396"/>
    </source>
</evidence>